<sequence length="198" mass="21482">MIEFVYPHTQLVAGVDEVGRGPLVGAVVTAAVILDPARPIAGLNDSKKLSEKRRLALCEEIKEKALSWSLGRAEPHEIDELNILHATMLAMQRAVAGLHIAPEYVLIDGNRCPKLPMPSMAVVKGDSRVPEISAASILAKVTRDAEMAALDIVFPQYGFAQHKGYPTAFHLEKLAEHGATEHHRRSFGPVKRALGLAS</sequence>
<reference key="1">
    <citation type="journal article" date="2008" name="J. Bacteriol.">
        <title>Insights into the environmental resistance gene pool from the genome sequence of the multidrug-resistant environmental isolate Escherichia coli SMS-3-5.</title>
        <authorList>
            <person name="Fricke W.F."/>
            <person name="Wright M.S."/>
            <person name="Lindell A.H."/>
            <person name="Harkins D.M."/>
            <person name="Baker-Austin C."/>
            <person name="Ravel J."/>
            <person name="Stepanauskas R."/>
        </authorList>
    </citation>
    <scope>NUCLEOTIDE SEQUENCE [LARGE SCALE GENOMIC DNA]</scope>
    <source>
        <strain>SMS-3-5 / SECEC</strain>
    </source>
</reference>
<gene>
    <name evidence="1" type="primary">rnhB</name>
    <name type="ordered locus">EcSMS35_0194</name>
</gene>
<proteinExistence type="inferred from homology"/>
<accession>B1LGY5</accession>
<comment type="function">
    <text evidence="1">Endonuclease that specifically degrades the RNA of RNA-DNA hybrids.</text>
</comment>
<comment type="catalytic activity">
    <reaction evidence="1">
        <text>Endonucleolytic cleavage to 5'-phosphomonoester.</text>
        <dbReference type="EC" id="3.1.26.4"/>
    </reaction>
</comment>
<comment type="cofactor">
    <cofactor evidence="1">
        <name>Mn(2+)</name>
        <dbReference type="ChEBI" id="CHEBI:29035"/>
    </cofactor>
    <cofactor evidence="1">
        <name>Mg(2+)</name>
        <dbReference type="ChEBI" id="CHEBI:18420"/>
    </cofactor>
    <text evidence="1">Manganese or magnesium. Binds 1 divalent metal ion per monomer in the absence of substrate. May bind a second metal ion after substrate binding.</text>
</comment>
<comment type="subcellular location">
    <subcellularLocation>
        <location evidence="1">Cytoplasm</location>
    </subcellularLocation>
</comment>
<comment type="similarity">
    <text evidence="1">Belongs to the RNase HII family.</text>
</comment>
<organism>
    <name type="scientific">Escherichia coli (strain SMS-3-5 / SECEC)</name>
    <dbReference type="NCBI Taxonomy" id="439855"/>
    <lineage>
        <taxon>Bacteria</taxon>
        <taxon>Pseudomonadati</taxon>
        <taxon>Pseudomonadota</taxon>
        <taxon>Gammaproteobacteria</taxon>
        <taxon>Enterobacterales</taxon>
        <taxon>Enterobacteriaceae</taxon>
        <taxon>Escherichia</taxon>
    </lineage>
</organism>
<feature type="chain" id="PRO_1000116847" description="Ribonuclease HII">
    <location>
        <begin position="1"/>
        <end position="198"/>
    </location>
</feature>
<feature type="domain" description="RNase H type-2" evidence="2">
    <location>
        <begin position="10"/>
        <end position="198"/>
    </location>
</feature>
<feature type="binding site" evidence="1">
    <location>
        <position position="16"/>
    </location>
    <ligand>
        <name>a divalent metal cation</name>
        <dbReference type="ChEBI" id="CHEBI:60240"/>
    </ligand>
</feature>
<feature type="binding site" evidence="1">
    <location>
        <position position="17"/>
    </location>
    <ligand>
        <name>a divalent metal cation</name>
        <dbReference type="ChEBI" id="CHEBI:60240"/>
    </ligand>
</feature>
<feature type="binding site" evidence="1">
    <location>
        <position position="108"/>
    </location>
    <ligand>
        <name>a divalent metal cation</name>
        <dbReference type="ChEBI" id="CHEBI:60240"/>
    </ligand>
</feature>
<protein>
    <recommendedName>
        <fullName evidence="1">Ribonuclease HII</fullName>
        <shortName evidence="1">RNase HII</shortName>
        <ecNumber evidence="1">3.1.26.4</ecNumber>
    </recommendedName>
</protein>
<evidence type="ECO:0000255" key="1">
    <source>
        <dbReference type="HAMAP-Rule" id="MF_00052"/>
    </source>
</evidence>
<evidence type="ECO:0000255" key="2">
    <source>
        <dbReference type="PROSITE-ProRule" id="PRU01319"/>
    </source>
</evidence>
<keyword id="KW-0963">Cytoplasm</keyword>
<keyword id="KW-0255">Endonuclease</keyword>
<keyword id="KW-0378">Hydrolase</keyword>
<keyword id="KW-0464">Manganese</keyword>
<keyword id="KW-0479">Metal-binding</keyword>
<keyword id="KW-0540">Nuclease</keyword>
<dbReference type="EC" id="3.1.26.4" evidence="1"/>
<dbReference type="EMBL" id="CP000970">
    <property type="protein sequence ID" value="ACB16781.1"/>
    <property type="molecule type" value="Genomic_DNA"/>
</dbReference>
<dbReference type="RefSeq" id="WP_000569423.1">
    <property type="nucleotide sequence ID" value="NC_010498.1"/>
</dbReference>
<dbReference type="SMR" id="B1LGY5"/>
<dbReference type="KEGG" id="ecm:EcSMS35_0194"/>
<dbReference type="HOGENOM" id="CLU_036532_3_2_6"/>
<dbReference type="Proteomes" id="UP000007011">
    <property type="component" value="Chromosome"/>
</dbReference>
<dbReference type="GO" id="GO:0005737">
    <property type="term" value="C:cytoplasm"/>
    <property type="evidence" value="ECO:0007669"/>
    <property type="project" value="UniProtKB-SubCell"/>
</dbReference>
<dbReference type="GO" id="GO:0032299">
    <property type="term" value="C:ribonuclease H2 complex"/>
    <property type="evidence" value="ECO:0007669"/>
    <property type="project" value="TreeGrafter"/>
</dbReference>
<dbReference type="GO" id="GO:0030145">
    <property type="term" value="F:manganese ion binding"/>
    <property type="evidence" value="ECO:0007669"/>
    <property type="project" value="UniProtKB-UniRule"/>
</dbReference>
<dbReference type="GO" id="GO:0003723">
    <property type="term" value="F:RNA binding"/>
    <property type="evidence" value="ECO:0007669"/>
    <property type="project" value="InterPro"/>
</dbReference>
<dbReference type="GO" id="GO:0004523">
    <property type="term" value="F:RNA-DNA hybrid ribonuclease activity"/>
    <property type="evidence" value="ECO:0007669"/>
    <property type="project" value="UniProtKB-UniRule"/>
</dbReference>
<dbReference type="GO" id="GO:0043137">
    <property type="term" value="P:DNA replication, removal of RNA primer"/>
    <property type="evidence" value="ECO:0007669"/>
    <property type="project" value="TreeGrafter"/>
</dbReference>
<dbReference type="GO" id="GO:0006298">
    <property type="term" value="P:mismatch repair"/>
    <property type="evidence" value="ECO:0007669"/>
    <property type="project" value="TreeGrafter"/>
</dbReference>
<dbReference type="CDD" id="cd07182">
    <property type="entry name" value="RNase_HII_bacteria_HII_like"/>
    <property type="match status" value="1"/>
</dbReference>
<dbReference type="FunFam" id="3.30.420.10:FF:000006">
    <property type="entry name" value="Ribonuclease HII"/>
    <property type="match status" value="1"/>
</dbReference>
<dbReference type="Gene3D" id="3.30.420.10">
    <property type="entry name" value="Ribonuclease H-like superfamily/Ribonuclease H"/>
    <property type="match status" value="1"/>
</dbReference>
<dbReference type="HAMAP" id="MF_00052_B">
    <property type="entry name" value="RNase_HII_B"/>
    <property type="match status" value="1"/>
</dbReference>
<dbReference type="InterPro" id="IPR022898">
    <property type="entry name" value="RNase_HII"/>
</dbReference>
<dbReference type="InterPro" id="IPR001352">
    <property type="entry name" value="RNase_HII/HIII"/>
</dbReference>
<dbReference type="InterPro" id="IPR024567">
    <property type="entry name" value="RNase_HII/HIII_dom"/>
</dbReference>
<dbReference type="InterPro" id="IPR012337">
    <property type="entry name" value="RNaseH-like_sf"/>
</dbReference>
<dbReference type="InterPro" id="IPR036397">
    <property type="entry name" value="RNaseH_sf"/>
</dbReference>
<dbReference type="NCBIfam" id="NF000594">
    <property type="entry name" value="PRK00015.1-1"/>
    <property type="match status" value="1"/>
</dbReference>
<dbReference type="NCBIfam" id="NF000595">
    <property type="entry name" value="PRK00015.1-3"/>
    <property type="match status" value="1"/>
</dbReference>
<dbReference type="NCBIfam" id="NF000596">
    <property type="entry name" value="PRK00015.1-4"/>
    <property type="match status" value="1"/>
</dbReference>
<dbReference type="PANTHER" id="PTHR10954">
    <property type="entry name" value="RIBONUCLEASE H2 SUBUNIT A"/>
    <property type="match status" value="1"/>
</dbReference>
<dbReference type="PANTHER" id="PTHR10954:SF18">
    <property type="entry name" value="RIBONUCLEASE HII"/>
    <property type="match status" value="1"/>
</dbReference>
<dbReference type="Pfam" id="PF01351">
    <property type="entry name" value="RNase_HII"/>
    <property type="match status" value="1"/>
</dbReference>
<dbReference type="SUPFAM" id="SSF53098">
    <property type="entry name" value="Ribonuclease H-like"/>
    <property type="match status" value="1"/>
</dbReference>
<dbReference type="PROSITE" id="PS51975">
    <property type="entry name" value="RNASE_H_2"/>
    <property type="match status" value="1"/>
</dbReference>
<name>RNH2_ECOSM</name>